<reference key="1">
    <citation type="journal article" date="2010" name="Genome Biol.">
        <title>Structure and dynamics of the pan-genome of Streptococcus pneumoniae and closely related species.</title>
        <authorList>
            <person name="Donati C."/>
            <person name="Hiller N.L."/>
            <person name="Tettelin H."/>
            <person name="Muzzi A."/>
            <person name="Croucher N.J."/>
            <person name="Angiuoli S.V."/>
            <person name="Oggioni M."/>
            <person name="Dunning Hotopp J.C."/>
            <person name="Hu F.Z."/>
            <person name="Riley D.R."/>
            <person name="Covacci A."/>
            <person name="Mitchell T.J."/>
            <person name="Bentley S.D."/>
            <person name="Kilian M."/>
            <person name="Ehrlich G.D."/>
            <person name="Rappuoli R."/>
            <person name="Moxon E.R."/>
            <person name="Masignani V."/>
        </authorList>
    </citation>
    <scope>NUCLEOTIDE SEQUENCE [LARGE SCALE GENOMIC DNA]</scope>
    <source>
        <strain>JJA</strain>
    </source>
</reference>
<organism>
    <name type="scientific">Streptococcus pneumoniae (strain JJA)</name>
    <dbReference type="NCBI Taxonomy" id="488222"/>
    <lineage>
        <taxon>Bacteria</taxon>
        <taxon>Bacillati</taxon>
        <taxon>Bacillota</taxon>
        <taxon>Bacilli</taxon>
        <taxon>Lactobacillales</taxon>
        <taxon>Streptococcaceae</taxon>
        <taxon>Streptococcus</taxon>
    </lineage>
</organism>
<proteinExistence type="inferred from homology"/>
<keyword id="KW-0067">ATP-binding</keyword>
<keyword id="KW-0963">Cytoplasm</keyword>
<keyword id="KW-0227">DNA damage</keyword>
<keyword id="KW-0228">DNA excision</keyword>
<keyword id="KW-0234">DNA repair</keyword>
<keyword id="KW-0267">Excision nuclease</keyword>
<keyword id="KW-0347">Helicase</keyword>
<keyword id="KW-0378">Hydrolase</keyword>
<keyword id="KW-0547">Nucleotide-binding</keyword>
<keyword id="KW-0742">SOS response</keyword>
<protein>
    <recommendedName>
        <fullName evidence="1">UvrABC system protein B</fullName>
        <shortName evidence="1">Protein UvrB</shortName>
    </recommendedName>
    <alternativeName>
        <fullName evidence="1">Excinuclease ABC subunit B</fullName>
    </alternativeName>
</protein>
<evidence type="ECO:0000255" key="1">
    <source>
        <dbReference type="HAMAP-Rule" id="MF_00204"/>
    </source>
</evidence>
<sequence length="662" mass="75734">MINHITDNQFKLVSKYQPSGDQPQAIEQLVDNIEGGEKAQILMGATGTGKTYTMSQVISKVNKPTLVIAHNKTLAGQLYGEFKEFFPENAVEYFVSYYDYYQPEAYVPSSDTYIEKDSSVNDEIDKLRHSATSALLERNDVIVVASVSCIYGLGSPKEYADSVVSLRPGLEISRDKLLNDLVDIQFERNDIDFQRGRFRVRGDVVEIFPASRDEHAFRVEFFGDEIDRIREVEALTGQVLGEVDHLAIFPATHFVTNDDHMEVAIAKIQAELEEQLAVFEKEGKLLEAQRLKQRTEYDIEMLREMGYTNGVENYSRHMDGRSEGEPPYTLLDFFPDDFLIMIDESHMTIGQIKGMYNGDRSRKEMLVNYGFRLPSALDNRPLRREEFESHVHQIVYVSATPGDYENEQTETVIEQIIRPTGLLDPEVEVRPTMGQIDDLLGEINARVEKNERTFITTLTKKMAEDLTDYFKEMGIKVKYMHSDIKTLERTEIIRDLRLGVFDVLVGINLLREGIDVPEVSLVAILDADKEGFLRNERGLIQTIGRAARNSEGHVIMYADTVTQSMQRAIDETARRRKIQMAYNEEHGIVPQTIKKEIRDLIAVTKAVAKEEDKEVDINSLNKQERKELVKKLEKQMQEAVEVLDFELAAQIRDMMLEVKALD</sequence>
<comment type="function">
    <text evidence="1">The UvrABC repair system catalyzes the recognition and processing of DNA lesions. A damage recognition complex composed of 2 UvrA and 2 UvrB subunits scans DNA for abnormalities. Upon binding of the UvrA(2)B(2) complex to a putative damaged site, the DNA wraps around one UvrB monomer. DNA wrap is dependent on ATP binding by UvrB and probably causes local melting of the DNA helix, facilitating insertion of UvrB beta-hairpin between the DNA strands. Then UvrB probes one DNA strand for the presence of a lesion. If a lesion is found the UvrA subunits dissociate and the UvrB-DNA preincision complex is formed. This complex is subsequently bound by UvrC and the second UvrB is released. If no lesion is found, the DNA wraps around the other UvrB subunit that will check the other stand for damage.</text>
</comment>
<comment type="subunit">
    <text evidence="1">Forms a heterotetramer with UvrA during the search for lesions. Interacts with UvrC in an incision complex.</text>
</comment>
<comment type="subcellular location">
    <subcellularLocation>
        <location evidence="1">Cytoplasm</location>
    </subcellularLocation>
</comment>
<comment type="domain">
    <text evidence="1">The beta-hairpin motif is involved in DNA binding.</text>
</comment>
<comment type="similarity">
    <text evidence="1">Belongs to the UvrB family.</text>
</comment>
<dbReference type="EMBL" id="CP000919">
    <property type="protein sequence ID" value="ACO18838.1"/>
    <property type="molecule type" value="Genomic_DNA"/>
</dbReference>
<dbReference type="RefSeq" id="WP_000607027.1">
    <property type="nucleotide sequence ID" value="NC_012466.1"/>
</dbReference>
<dbReference type="SMR" id="C1CEJ5"/>
<dbReference type="KEGG" id="sjj:SPJ_1152"/>
<dbReference type="HOGENOM" id="CLU_009621_2_1_9"/>
<dbReference type="Proteomes" id="UP000002206">
    <property type="component" value="Chromosome"/>
</dbReference>
<dbReference type="GO" id="GO:0005737">
    <property type="term" value="C:cytoplasm"/>
    <property type="evidence" value="ECO:0007669"/>
    <property type="project" value="UniProtKB-SubCell"/>
</dbReference>
<dbReference type="GO" id="GO:0009380">
    <property type="term" value="C:excinuclease repair complex"/>
    <property type="evidence" value="ECO:0007669"/>
    <property type="project" value="InterPro"/>
</dbReference>
<dbReference type="GO" id="GO:0005524">
    <property type="term" value="F:ATP binding"/>
    <property type="evidence" value="ECO:0007669"/>
    <property type="project" value="UniProtKB-UniRule"/>
</dbReference>
<dbReference type="GO" id="GO:0016887">
    <property type="term" value="F:ATP hydrolysis activity"/>
    <property type="evidence" value="ECO:0007669"/>
    <property type="project" value="InterPro"/>
</dbReference>
<dbReference type="GO" id="GO:0003677">
    <property type="term" value="F:DNA binding"/>
    <property type="evidence" value="ECO:0007669"/>
    <property type="project" value="UniProtKB-UniRule"/>
</dbReference>
<dbReference type="GO" id="GO:0009381">
    <property type="term" value="F:excinuclease ABC activity"/>
    <property type="evidence" value="ECO:0007669"/>
    <property type="project" value="UniProtKB-UniRule"/>
</dbReference>
<dbReference type="GO" id="GO:0004386">
    <property type="term" value="F:helicase activity"/>
    <property type="evidence" value="ECO:0007669"/>
    <property type="project" value="UniProtKB-KW"/>
</dbReference>
<dbReference type="GO" id="GO:0006289">
    <property type="term" value="P:nucleotide-excision repair"/>
    <property type="evidence" value="ECO:0007669"/>
    <property type="project" value="UniProtKB-UniRule"/>
</dbReference>
<dbReference type="GO" id="GO:0009432">
    <property type="term" value="P:SOS response"/>
    <property type="evidence" value="ECO:0007669"/>
    <property type="project" value="UniProtKB-UniRule"/>
</dbReference>
<dbReference type="CDD" id="cd17916">
    <property type="entry name" value="DEXHc_UvrB"/>
    <property type="match status" value="1"/>
</dbReference>
<dbReference type="CDD" id="cd18790">
    <property type="entry name" value="SF2_C_UvrB"/>
    <property type="match status" value="1"/>
</dbReference>
<dbReference type="Gene3D" id="3.40.50.300">
    <property type="entry name" value="P-loop containing nucleotide triphosphate hydrolases"/>
    <property type="match status" value="3"/>
</dbReference>
<dbReference type="Gene3D" id="4.10.860.10">
    <property type="entry name" value="UVR domain"/>
    <property type="match status" value="1"/>
</dbReference>
<dbReference type="HAMAP" id="MF_00204">
    <property type="entry name" value="UvrB"/>
    <property type="match status" value="1"/>
</dbReference>
<dbReference type="InterPro" id="IPR006935">
    <property type="entry name" value="Helicase/UvrB_N"/>
</dbReference>
<dbReference type="InterPro" id="IPR014001">
    <property type="entry name" value="Helicase_ATP-bd"/>
</dbReference>
<dbReference type="InterPro" id="IPR001650">
    <property type="entry name" value="Helicase_C-like"/>
</dbReference>
<dbReference type="InterPro" id="IPR027417">
    <property type="entry name" value="P-loop_NTPase"/>
</dbReference>
<dbReference type="InterPro" id="IPR001943">
    <property type="entry name" value="UVR_dom"/>
</dbReference>
<dbReference type="InterPro" id="IPR036876">
    <property type="entry name" value="UVR_dom_sf"/>
</dbReference>
<dbReference type="InterPro" id="IPR004807">
    <property type="entry name" value="UvrB"/>
</dbReference>
<dbReference type="InterPro" id="IPR041471">
    <property type="entry name" value="UvrB_inter"/>
</dbReference>
<dbReference type="InterPro" id="IPR024759">
    <property type="entry name" value="UvrB_YAD/RRR_dom"/>
</dbReference>
<dbReference type="NCBIfam" id="NF003673">
    <property type="entry name" value="PRK05298.1"/>
    <property type="match status" value="1"/>
</dbReference>
<dbReference type="NCBIfam" id="TIGR00631">
    <property type="entry name" value="uvrb"/>
    <property type="match status" value="1"/>
</dbReference>
<dbReference type="PANTHER" id="PTHR24029">
    <property type="entry name" value="UVRABC SYSTEM PROTEIN B"/>
    <property type="match status" value="1"/>
</dbReference>
<dbReference type="PANTHER" id="PTHR24029:SF0">
    <property type="entry name" value="UVRABC SYSTEM PROTEIN B"/>
    <property type="match status" value="1"/>
</dbReference>
<dbReference type="Pfam" id="PF00271">
    <property type="entry name" value="Helicase_C"/>
    <property type="match status" value="1"/>
</dbReference>
<dbReference type="Pfam" id="PF04851">
    <property type="entry name" value="ResIII"/>
    <property type="match status" value="1"/>
</dbReference>
<dbReference type="Pfam" id="PF02151">
    <property type="entry name" value="UVR"/>
    <property type="match status" value="1"/>
</dbReference>
<dbReference type="Pfam" id="PF12344">
    <property type="entry name" value="UvrB"/>
    <property type="match status" value="1"/>
</dbReference>
<dbReference type="Pfam" id="PF17757">
    <property type="entry name" value="UvrB_inter"/>
    <property type="match status" value="1"/>
</dbReference>
<dbReference type="SMART" id="SM00487">
    <property type="entry name" value="DEXDc"/>
    <property type="match status" value="1"/>
</dbReference>
<dbReference type="SMART" id="SM00490">
    <property type="entry name" value="HELICc"/>
    <property type="match status" value="1"/>
</dbReference>
<dbReference type="SUPFAM" id="SSF46600">
    <property type="entry name" value="C-terminal UvrC-binding domain of UvrB"/>
    <property type="match status" value="1"/>
</dbReference>
<dbReference type="SUPFAM" id="SSF52540">
    <property type="entry name" value="P-loop containing nucleoside triphosphate hydrolases"/>
    <property type="match status" value="2"/>
</dbReference>
<dbReference type="PROSITE" id="PS51192">
    <property type="entry name" value="HELICASE_ATP_BIND_1"/>
    <property type="match status" value="1"/>
</dbReference>
<dbReference type="PROSITE" id="PS51194">
    <property type="entry name" value="HELICASE_CTER"/>
    <property type="match status" value="1"/>
</dbReference>
<dbReference type="PROSITE" id="PS50151">
    <property type="entry name" value="UVR"/>
    <property type="match status" value="1"/>
</dbReference>
<name>UVRB_STRZJ</name>
<feature type="chain" id="PRO_1000200555" description="UvrABC system protein B">
    <location>
        <begin position="1"/>
        <end position="662"/>
    </location>
</feature>
<feature type="domain" description="Helicase ATP-binding" evidence="1">
    <location>
        <begin position="31"/>
        <end position="188"/>
    </location>
</feature>
<feature type="domain" description="Helicase C-terminal" evidence="1">
    <location>
        <begin position="435"/>
        <end position="601"/>
    </location>
</feature>
<feature type="domain" description="UVR" evidence="1">
    <location>
        <begin position="626"/>
        <end position="661"/>
    </location>
</feature>
<feature type="short sequence motif" description="Beta-hairpin">
    <location>
        <begin position="97"/>
        <end position="120"/>
    </location>
</feature>
<feature type="binding site" evidence="1">
    <location>
        <begin position="44"/>
        <end position="51"/>
    </location>
    <ligand>
        <name>ATP</name>
        <dbReference type="ChEBI" id="CHEBI:30616"/>
    </ligand>
</feature>
<accession>C1CEJ5</accession>
<gene>
    <name evidence="1" type="primary">uvrB</name>
    <name type="ordered locus">SPJ_1152</name>
</gene>